<name>DAPB_STAES</name>
<reference key="1">
    <citation type="journal article" date="2003" name="Mol. Microbiol.">
        <title>Genome-based analysis of virulence genes in a non-biofilm-forming Staphylococcus epidermidis strain (ATCC 12228).</title>
        <authorList>
            <person name="Zhang Y.-Q."/>
            <person name="Ren S.-X."/>
            <person name="Li H.-L."/>
            <person name="Wang Y.-X."/>
            <person name="Fu G."/>
            <person name="Yang J."/>
            <person name="Qin Z.-Q."/>
            <person name="Miao Y.-G."/>
            <person name="Wang W.-Y."/>
            <person name="Chen R.-S."/>
            <person name="Shen Y."/>
            <person name="Chen Z."/>
            <person name="Yuan Z.-H."/>
            <person name="Zhao G.-P."/>
            <person name="Qu D."/>
            <person name="Danchin A."/>
            <person name="Wen Y.-M."/>
        </authorList>
    </citation>
    <scope>NUCLEOTIDE SEQUENCE [LARGE SCALE GENOMIC DNA]</scope>
    <source>
        <strain>ATCC 12228 / FDA PCI 1200</strain>
    </source>
</reference>
<accession>Q8CP95</accession>
<organism>
    <name type="scientific">Staphylococcus epidermidis (strain ATCC 12228 / FDA PCI 1200)</name>
    <dbReference type="NCBI Taxonomy" id="176280"/>
    <lineage>
        <taxon>Bacteria</taxon>
        <taxon>Bacillati</taxon>
        <taxon>Bacillota</taxon>
        <taxon>Bacilli</taxon>
        <taxon>Bacillales</taxon>
        <taxon>Staphylococcaceae</taxon>
        <taxon>Staphylococcus</taxon>
    </lineage>
</organism>
<evidence type="ECO:0000255" key="1">
    <source>
        <dbReference type="HAMAP-Rule" id="MF_00102"/>
    </source>
</evidence>
<evidence type="ECO:0000305" key="2"/>
<proteinExistence type="inferred from homology"/>
<gene>
    <name evidence="1" type="primary">dapB</name>
    <name type="ordered locus">SE_1076</name>
</gene>
<keyword id="KW-0028">Amino-acid biosynthesis</keyword>
<keyword id="KW-0963">Cytoplasm</keyword>
<keyword id="KW-0220">Diaminopimelate biosynthesis</keyword>
<keyword id="KW-0457">Lysine biosynthesis</keyword>
<keyword id="KW-0520">NAD</keyword>
<keyword id="KW-0521">NADP</keyword>
<keyword id="KW-0560">Oxidoreductase</keyword>
<feature type="chain" id="PRO_0000141492" description="4-hydroxy-tetrahydrodipicolinate reductase">
    <location>
        <begin position="1"/>
        <end position="240"/>
    </location>
</feature>
<feature type="active site" description="Proton donor/acceptor" evidence="1">
    <location>
        <position position="135"/>
    </location>
</feature>
<feature type="active site" description="Proton donor" evidence="1">
    <location>
        <position position="139"/>
    </location>
</feature>
<feature type="binding site" evidence="1">
    <location>
        <begin position="79"/>
        <end position="81"/>
    </location>
    <ligand>
        <name>NAD(+)</name>
        <dbReference type="ChEBI" id="CHEBI:57540"/>
    </ligand>
</feature>
<feature type="binding site" evidence="1">
    <location>
        <begin position="103"/>
        <end position="106"/>
    </location>
    <ligand>
        <name>NAD(+)</name>
        <dbReference type="ChEBI" id="CHEBI:57540"/>
    </ligand>
</feature>
<feature type="binding site" evidence="1">
    <location>
        <position position="136"/>
    </location>
    <ligand>
        <name>(S)-2,3,4,5-tetrahydrodipicolinate</name>
        <dbReference type="ChEBI" id="CHEBI:16845"/>
    </ligand>
</feature>
<feature type="binding site" evidence="1">
    <location>
        <begin position="145"/>
        <end position="146"/>
    </location>
    <ligand>
        <name>(S)-2,3,4,5-tetrahydrodipicolinate</name>
        <dbReference type="ChEBI" id="CHEBI:16845"/>
    </ligand>
</feature>
<comment type="function">
    <text evidence="1">Catalyzes the conversion of 4-hydroxy-tetrahydrodipicolinate (HTPA) to tetrahydrodipicolinate.</text>
</comment>
<comment type="catalytic activity">
    <reaction evidence="1">
        <text>(S)-2,3,4,5-tetrahydrodipicolinate + NAD(+) + H2O = (2S,4S)-4-hydroxy-2,3,4,5-tetrahydrodipicolinate + NADH + H(+)</text>
        <dbReference type="Rhea" id="RHEA:35323"/>
        <dbReference type="ChEBI" id="CHEBI:15377"/>
        <dbReference type="ChEBI" id="CHEBI:15378"/>
        <dbReference type="ChEBI" id="CHEBI:16845"/>
        <dbReference type="ChEBI" id="CHEBI:57540"/>
        <dbReference type="ChEBI" id="CHEBI:57945"/>
        <dbReference type="ChEBI" id="CHEBI:67139"/>
        <dbReference type="EC" id="1.17.1.8"/>
    </reaction>
</comment>
<comment type="catalytic activity">
    <reaction evidence="1">
        <text>(S)-2,3,4,5-tetrahydrodipicolinate + NADP(+) + H2O = (2S,4S)-4-hydroxy-2,3,4,5-tetrahydrodipicolinate + NADPH + H(+)</text>
        <dbReference type="Rhea" id="RHEA:35331"/>
        <dbReference type="ChEBI" id="CHEBI:15377"/>
        <dbReference type="ChEBI" id="CHEBI:15378"/>
        <dbReference type="ChEBI" id="CHEBI:16845"/>
        <dbReference type="ChEBI" id="CHEBI:57783"/>
        <dbReference type="ChEBI" id="CHEBI:58349"/>
        <dbReference type="ChEBI" id="CHEBI:67139"/>
        <dbReference type="EC" id="1.17.1.8"/>
    </reaction>
</comment>
<comment type="pathway">
    <text evidence="1">Amino-acid biosynthesis; L-lysine biosynthesis via DAP pathway; (S)-tetrahydrodipicolinate from L-aspartate: step 4/4.</text>
</comment>
<comment type="subcellular location">
    <subcellularLocation>
        <location evidence="1">Cytoplasm</location>
    </subcellularLocation>
</comment>
<comment type="similarity">
    <text evidence="1">Belongs to the DapB family.</text>
</comment>
<comment type="caution">
    <text evidence="2">Was originally thought to be a dihydrodipicolinate reductase (DHDPR), catalyzing the conversion of dihydrodipicolinate to tetrahydrodipicolinate. However, it was shown in E.coli that the substrate of the enzymatic reaction is not dihydrodipicolinate (DHDP) but in fact (2S,4S)-4-hydroxy-2,3,4,5-tetrahydrodipicolinic acid (HTPA), the product released by the DapA-catalyzed reaction.</text>
</comment>
<sequence>MNILLIGYGAMNQRVARLAEDKGHEIVGVIDRTSKASTPYSQYQHISECKEADVAIDFSNPELLFPLLEEQFNLPLVIATTGEKETLIQKLETLSQRTPVFFSANMSYGVHALTKILETAVPLLQDFDIELTEAHHNKKVDAPSGTLVKLYDVIKELRDNVSPVYDRHEKTEKRTHDEIGIHAVRGGTIVGEHDILFAGTDETITISHKAQSKDIFANGAIGAAEKLIHKNPGFYTFNNL</sequence>
<protein>
    <recommendedName>
        <fullName evidence="1">4-hydroxy-tetrahydrodipicolinate reductase</fullName>
        <shortName evidence="1">HTPA reductase</shortName>
        <ecNumber evidence="1">1.17.1.8</ecNumber>
    </recommendedName>
</protein>
<dbReference type="EC" id="1.17.1.8" evidence="1"/>
<dbReference type="EMBL" id="AE015929">
    <property type="protein sequence ID" value="AAO04673.1"/>
    <property type="molecule type" value="Genomic_DNA"/>
</dbReference>
<dbReference type="RefSeq" id="NP_764631.1">
    <property type="nucleotide sequence ID" value="NC_004461.1"/>
</dbReference>
<dbReference type="RefSeq" id="WP_001830951.1">
    <property type="nucleotide sequence ID" value="NZ_WBME01000002.1"/>
</dbReference>
<dbReference type="SMR" id="Q8CP95"/>
<dbReference type="GeneID" id="50018798"/>
<dbReference type="KEGG" id="sep:SE_1076"/>
<dbReference type="PATRIC" id="fig|176280.10.peg.1052"/>
<dbReference type="eggNOG" id="COG0289">
    <property type="taxonomic scope" value="Bacteria"/>
</dbReference>
<dbReference type="HOGENOM" id="CLU_047479_2_2_9"/>
<dbReference type="OrthoDB" id="9790352at2"/>
<dbReference type="UniPathway" id="UPA00034">
    <property type="reaction ID" value="UER00018"/>
</dbReference>
<dbReference type="Proteomes" id="UP000001411">
    <property type="component" value="Chromosome"/>
</dbReference>
<dbReference type="GO" id="GO:0005829">
    <property type="term" value="C:cytosol"/>
    <property type="evidence" value="ECO:0007669"/>
    <property type="project" value="TreeGrafter"/>
</dbReference>
<dbReference type="GO" id="GO:0008839">
    <property type="term" value="F:4-hydroxy-tetrahydrodipicolinate reductase"/>
    <property type="evidence" value="ECO:0007669"/>
    <property type="project" value="UniProtKB-EC"/>
</dbReference>
<dbReference type="GO" id="GO:0051287">
    <property type="term" value="F:NAD binding"/>
    <property type="evidence" value="ECO:0007669"/>
    <property type="project" value="UniProtKB-UniRule"/>
</dbReference>
<dbReference type="GO" id="GO:0050661">
    <property type="term" value="F:NADP binding"/>
    <property type="evidence" value="ECO:0007669"/>
    <property type="project" value="UniProtKB-UniRule"/>
</dbReference>
<dbReference type="GO" id="GO:0016726">
    <property type="term" value="F:oxidoreductase activity, acting on CH or CH2 groups, NAD or NADP as acceptor"/>
    <property type="evidence" value="ECO:0007669"/>
    <property type="project" value="UniProtKB-UniRule"/>
</dbReference>
<dbReference type="GO" id="GO:0019877">
    <property type="term" value="P:diaminopimelate biosynthetic process"/>
    <property type="evidence" value="ECO:0007669"/>
    <property type="project" value="UniProtKB-UniRule"/>
</dbReference>
<dbReference type="GO" id="GO:0009089">
    <property type="term" value="P:lysine biosynthetic process via diaminopimelate"/>
    <property type="evidence" value="ECO:0007669"/>
    <property type="project" value="UniProtKB-UniRule"/>
</dbReference>
<dbReference type="CDD" id="cd02274">
    <property type="entry name" value="DHDPR_N"/>
    <property type="match status" value="1"/>
</dbReference>
<dbReference type="FunFam" id="3.30.360.10:FF:000009">
    <property type="entry name" value="4-hydroxy-tetrahydrodipicolinate reductase"/>
    <property type="match status" value="1"/>
</dbReference>
<dbReference type="Gene3D" id="3.30.360.10">
    <property type="entry name" value="Dihydrodipicolinate Reductase, domain 2"/>
    <property type="match status" value="1"/>
</dbReference>
<dbReference type="Gene3D" id="3.40.50.720">
    <property type="entry name" value="NAD(P)-binding Rossmann-like Domain"/>
    <property type="match status" value="1"/>
</dbReference>
<dbReference type="HAMAP" id="MF_00102">
    <property type="entry name" value="DapB"/>
    <property type="match status" value="1"/>
</dbReference>
<dbReference type="InterPro" id="IPR022663">
    <property type="entry name" value="DapB_C"/>
</dbReference>
<dbReference type="InterPro" id="IPR000846">
    <property type="entry name" value="DapB_N"/>
</dbReference>
<dbReference type="InterPro" id="IPR022664">
    <property type="entry name" value="DapB_N_CS"/>
</dbReference>
<dbReference type="InterPro" id="IPR023940">
    <property type="entry name" value="DHDPR_bac"/>
</dbReference>
<dbReference type="InterPro" id="IPR036291">
    <property type="entry name" value="NAD(P)-bd_dom_sf"/>
</dbReference>
<dbReference type="NCBIfam" id="TIGR00036">
    <property type="entry name" value="dapB"/>
    <property type="match status" value="1"/>
</dbReference>
<dbReference type="PANTHER" id="PTHR20836:SF7">
    <property type="entry name" value="4-HYDROXY-TETRAHYDRODIPICOLINATE REDUCTASE"/>
    <property type="match status" value="1"/>
</dbReference>
<dbReference type="PANTHER" id="PTHR20836">
    <property type="entry name" value="DIHYDRODIPICOLINATE REDUCTASE"/>
    <property type="match status" value="1"/>
</dbReference>
<dbReference type="Pfam" id="PF05173">
    <property type="entry name" value="DapB_C"/>
    <property type="match status" value="1"/>
</dbReference>
<dbReference type="Pfam" id="PF01113">
    <property type="entry name" value="DapB_N"/>
    <property type="match status" value="1"/>
</dbReference>
<dbReference type="PIRSF" id="PIRSF000161">
    <property type="entry name" value="DHPR"/>
    <property type="match status" value="1"/>
</dbReference>
<dbReference type="SUPFAM" id="SSF55347">
    <property type="entry name" value="Glyceraldehyde-3-phosphate dehydrogenase-like, C-terminal domain"/>
    <property type="match status" value="1"/>
</dbReference>
<dbReference type="SUPFAM" id="SSF51735">
    <property type="entry name" value="NAD(P)-binding Rossmann-fold domains"/>
    <property type="match status" value="1"/>
</dbReference>
<dbReference type="PROSITE" id="PS01298">
    <property type="entry name" value="DAPB"/>
    <property type="match status" value="1"/>
</dbReference>